<dbReference type="EC" id="1.17.7.4" evidence="1"/>
<dbReference type="EMBL" id="AE017355">
    <property type="protein sequence ID" value="AAT60803.1"/>
    <property type="molecule type" value="Genomic_DNA"/>
</dbReference>
<dbReference type="RefSeq" id="WP_000706669.1">
    <property type="nucleotide sequence ID" value="NC_005957.1"/>
</dbReference>
<dbReference type="RefSeq" id="YP_038346.1">
    <property type="nucleotide sequence ID" value="NC_005957.1"/>
</dbReference>
<dbReference type="SMR" id="Q6HDN0"/>
<dbReference type="KEGG" id="btk:BT9727_4028"/>
<dbReference type="PATRIC" id="fig|281309.8.peg.4296"/>
<dbReference type="HOGENOM" id="CLU_027486_0_0_9"/>
<dbReference type="UniPathway" id="UPA00056">
    <property type="reaction ID" value="UER00097"/>
</dbReference>
<dbReference type="UniPathway" id="UPA00059">
    <property type="reaction ID" value="UER00105"/>
</dbReference>
<dbReference type="Proteomes" id="UP000001301">
    <property type="component" value="Chromosome"/>
</dbReference>
<dbReference type="GO" id="GO:0051539">
    <property type="term" value="F:4 iron, 4 sulfur cluster binding"/>
    <property type="evidence" value="ECO:0007669"/>
    <property type="project" value="UniProtKB-UniRule"/>
</dbReference>
<dbReference type="GO" id="GO:0051745">
    <property type="term" value="F:4-hydroxy-3-methylbut-2-enyl diphosphate reductase activity"/>
    <property type="evidence" value="ECO:0007669"/>
    <property type="project" value="UniProtKB-UniRule"/>
</dbReference>
<dbReference type="GO" id="GO:0046872">
    <property type="term" value="F:metal ion binding"/>
    <property type="evidence" value="ECO:0007669"/>
    <property type="project" value="UniProtKB-KW"/>
</dbReference>
<dbReference type="GO" id="GO:0050992">
    <property type="term" value="P:dimethylallyl diphosphate biosynthetic process"/>
    <property type="evidence" value="ECO:0007669"/>
    <property type="project" value="UniProtKB-UniRule"/>
</dbReference>
<dbReference type="GO" id="GO:0019288">
    <property type="term" value="P:isopentenyl diphosphate biosynthetic process, methylerythritol 4-phosphate pathway"/>
    <property type="evidence" value="ECO:0007669"/>
    <property type="project" value="UniProtKB-UniRule"/>
</dbReference>
<dbReference type="GO" id="GO:0016114">
    <property type="term" value="P:terpenoid biosynthetic process"/>
    <property type="evidence" value="ECO:0007669"/>
    <property type="project" value="UniProtKB-UniRule"/>
</dbReference>
<dbReference type="CDD" id="cd13944">
    <property type="entry name" value="lytB_ispH"/>
    <property type="match status" value="1"/>
</dbReference>
<dbReference type="Gene3D" id="3.40.50.11270">
    <property type="match status" value="1"/>
</dbReference>
<dbReference type="Gene3D" id="3.40.1010.20">
    <property type="entry name" value="4-hydroxy-3-methylbut-2-enyl diphosphate reductase, catalytic domain"/>
    <property type="match status" value="2"/>
</dbReference>
<dbReference type="HAMAP" id="MF_00191">
    <property type="entry name" value="IspH"/>
    <property type="match status" value="1"/>
</dbReference>
<dbReference type="InterPro" id="IPR003451">
    <property type="entry name" value="LytB/IspH"/>
</dbReference>
<dbReference type="NCBIfam" id="TIGR00216">
    <property type="entry name" value="ispH_lytB"/>
    <property type="match status" value="1"/>
</dbReference>
<dbReference type="NCBIfam" id="NF002187">
    <property type="entry name" value="PRK01045.1-1"/>
    <property type="match status" value="1"/>
</dbReference>
<dbReference type="PANTHER" id="PTHR30426">
    <property type="entry name" value="4-HYDROXY-3-METHYLBUT-2-ENYL DIPHOSPHATE REDUCTASE"/>
    <property type="match status" value="1"/>
</dbReference>
<dbReference type="PANTHER" id="PTHR30426:SF0">
    <property type="entry name" value="4-HYDROXY-3-METHYLBUT-2-ENYL DIPHOSPHATE REDUCTASE"/>
    <property type="match status" value="1"/>
</dbReference>
<dbReference type="Pfam" id="PF02401">
    <property type="entry name" value="LYTB"/>
    <property type="match status" value="1"/>
</dbReference>
<evidence type="ECO:0000255" key="1">
    <source>
        <dbReference type="HAMAP-Rule" id="MF_00191"/>
    </source>
</evidence>
<accession>Q6HDN0</accession>
<proteinExistence type="inferred from homology"/>
<keyword id="KW-0004">4Fe-4S</keyword>
<keyword id="KW-0408">Iron</keyword>
<keyword id="KW-0411">Iron-sulfur</keyword>
<keyword id="KW-0414">Isoprene biosynthesis</keyword>
<keyword id="KW-0479">Metal-binding</keyword>
<keyword id="KW-0560">Oxidoreductase</keyword>
<organism>
    <name type="scientific">Bacillus thuringiensis subsp. konkukian (strain 97-27)</name>
    <dbReference type="NCBI Taxonomy" id="281309"/>
    <lineage>
        <taxon>Bacteria</taxon>
        <taxon>Bacillati</taxon>
        <taxon>Bacillota</taxon>
        <taxon>Bacilli</taxon>
        <taxon>Bacillales</taxon>
        <taxon>Bacillaceae</taxon>
        <taxon>Bacillus</taxon>
        <taxon>Bacillus cereus group</taxon>
    </lineage>
</organism>
<name>ISPH_BACHK</name>
<gene>
    <name evidence="1" type="primary">ispH</name>
    <name type="synonym">lytB</name>
    <name type="ordered locus">BT9727_4028</name>
</gene>
<protein>
    <recommendedName>
        <fullName evidence="1">4-hydroxy-3-methylbut-2-enyl diphosphate reductase</fullName>
        <shortName evidence="1">HMBPP reductase</shortName>
        <ecNumber evidence="1">1.17.7.4</ecNumber>
    </recommendedName>
</protein>
<comment type="function">
    <text evidence="1">Catalyzes the conversion of 1-hydroxy-2-methyl-2-(E)-butenyl 4-diphosphate (HMBPP) into a mixture of isopentenyl diphosphate (IPP) and dimethylallyl diphosphate (DMAPP). Acts in the terminal step of the DOXP/MEP pathway for isoprenoid precursor biosynthesis.</text>
</comment>
<comment type="catalytic activity">
    <reaction evidence="1">
        <text>isopentenyl diphosphate + 2 oxidized [2Fe-2S]-[ferredoxin] + H2O = (2E)-4-hydroxy-3-methylbut-2-enyl diphosphate + 2 reduced [2Fe-2S]-[ferredoxin] + 2 H(+)</text>
        <dbReference type="Rhea" id="RHEA:24488"/>
        <dbReference type="Rhea" id="RHEA-COMP:10000"/>
        <dbReference type="Rhea" id="RHEA-COMP:10001"/>
        <dbReference type="ChEBI" id="CHEBI:15377"/>
        <dbReference type="ChEBI" id="CHEBI:15378"/>
        <dbReference type="ChEBI" id="CHEBI:33737"/>
        <dbReference type="ChEBI" id="CHEBI:33738"/>
        <dbReference type="ChEBI" id="CHEBI:128753"/>
        <dbReference type="ChEBI" id="CHEBI:128769"/>
        <dbReference type="EC" id="1.17.7.4"/>
    </reaction>
</comment>
<comment type="catalytic activity">
    <reaction evidence="1">
        <text>dimethylallyl diphosphate + 2 oxidized [2Fe-2S]-[ferredoxin] + H2O = (2E)-4-hydroxy-3-methylbut-2-enyl diphosphate + 2 reduced [2Fe-2S]-[ferredoxin] + 2 H(+)</text>
        <dbReference type="Rhea" id="RHEA:24825"/>
        <dbReference type="Rhea" id="RHEA-COMP:10000"/>
        <dbReference type="Rhea" id="RHEA-COMP:10001"/>
        <dbReference type="ChEBI" id="CHEBI:15377"/>
        <dbReference type="ChEBI" id="CHEBI:15378"/>
        <dbReference type="ChEBI" id="CHEBI:33737"/>
        <dbReference type="ChEBI" id="CHEBI:33738"/>
        <dbReference type="ChEBI" id="CHEBI:57623"/>
        <dbReference type="ChEBI" id="CHEBI:128753"/>
        <dbReference type="EC" id="1.17.7.4"/>
    </reaction>
</comment>
<comment type="cofactor">
    <cofactor evidence="1">
        <name>[4Fe-4S] cluster</name>
        <dbReference type="ChEBI" id="CHEBI:49883"/>
    </cofactor>
    <text evidence="1">Binds 1 [4Fe-4S] cluster per subunit.</text>
</comment>
<comment type="pathway">
    <text evidence="1">Isoprenoid biosynthesis; dimethylallyl diphosphate biosynthesis; dimethylallyl diphosphate from (2E)-4-hydroxy-3-methylbutenyl diphosphate: step 1/1.</text>
</comment>
<comment type="pathway">
    <text evidence="1">Isoprenoid biosynthesis; isopentenyl diphosphate biosynthesis via DXP pathway; isopentenyl diphosphate from 1-deoxy-D-xylulose 5-phosphate: step 6/6.</text>
</comment>
<comment type="similarity">
    <text evidence="1">Belongs to the IspH family.</text>
</comment>
<sequence length="316" mass="34967">MKIVKISPRGYCYGVVDAMVIARNAALDTSLPRPIYILGMIVHNKHVTDAFEEDGIITLDGPSRLDILDKIDSGTVIFTAHGVSPEVKQRAKEKGLTTIDATCPDVTKTHDLIEAKKAEGYHVIYIGKKNHPEPEGAVGIAPDIVHLIERADDLKTLEIPTDKILVTNQTTMSQWDVQHLMEDIQKKFPTAEFHKEICLATQVRQEAVAKQADVADLTIVVGDPKSNNSNRLAQVSQEIAGTKAYRVADVSEIKLEWLQGVENVAVTAGASTPTPITKEVIAFLEQYDPMNPATWERVRKVPLQKILPRVKVKKEQ</sequence>
<reference key="1">
    <citation type="journal article" date="2006" name="J. Bacteriol.">
        <title>Pathogenomic sequence analysis of Bacillus cereus and Bacillus thuringiensis isolates closely related to Bacillus anthracis.</title>
        <authorList>
            <person name="Han C.S."/>
            <person name="Xie G."/>
            <person name="Challacombe J.F."/>
            <person name="Altherr M.R."/>
            <person name="Bhotika S.S."/>
            <person name="Bruce D."/>
            <person name="Campbell C.S."/>
            <person name="Campbell M.L."/>
            <person name="Chen J."/>
            <person name="Chertkov O."/>
            <person name="Cleland C."/>
            <person name="Dimitrijevic M."/>
            <person name="Doggett N.A."/>
            <person name="Fawcett J.J."/>
            <person name="Glavina T."/>
            <person name="Goodwin L.A."/>
            <person name="Hill K.K."/>
            <person name="Hitchcock P."/>
            <person name="Jackson P.J."/>
            <person name="Keim P."/>
            <person name="Kewalramani A.R."/>
            <person name="Longmire J."/>
            <person name="Lucas S."/>
            <person name="Malfatti S."/>
            <person name="McMurry K."/>
            <person name="Meincke L.J."/>
            <person name="Misra M."/>
            <person name="Moseman B.L."/>
            <person name="Mundt M."/>
            <person name="Munk A.C."/>
            <person name="Okinaka R.T."/>
            <person name="Parson-Quintana B."/>
            <person name="Reilly L.P."/>
            <person name="Richardson P."/>
            <person name="Robinson D.L."/>
            <person name="Rubin E."/>
            <person name="Saunders E."/>
            <person name="Tapia R."/>
            <person name="Tesmer J.G."/>
            <person name="Thayer N."/>
            <person name="Thompson L.S."/>
            <person name="Tice H."/>
            <person name="Ticknor L.O."/>
            <person name="Wills P.L."/>
            <person name="Brettin T.S."/>
            <person name="Gilna P."/>
        </authorList>
    </citation>
    <scope>NUCLEOTIDE SEQUENCE [LARGE SCALE GENOMIC DNA]</scope>
    <source>
        <strain>97-27</strain>
    </source>
</reference>
<feature type="chain" id="PRO_0000128773" description="4-hydroxy-3-methylbut-2-enyl diphosphate reductase">
    <location>
        <begin position="1"/>
        <end position="316"/>
    </location>
</feature>
<feature type="active site" description="Proton donor" evidence="1">
    <location>
        <position position="133"/>
    </location>
</feature>
<feature type="binding site" evidence="1">
    <location>
        <position position="12"/>
    </location>
    <ligand>
        <name>[4Fe-4S] cluster</name>
        <dbReference type="ChEBI" id="CHEBI:49883"/>
    </ligand>
</feature>
<feature type="binding site" evidence="1">
    <location>
        <position position="43"/>
    </location>
    <ligand>
        <name>(2E)-4-hydroxy-3-methylbut-2-enyl diphosphate</name>
        <dbReference type="ChEBI" id="CHEBI:128753"/>
    </ligand>
</feature>
<feature type="binding site" evidence="1">
    <location>
        <position position="43"/>
    </location>
    <ligand>
        <name>dimethylallyl diphosphate</name>
        <dbReference type="ChEBI" id="CHEBI:57623"/>
    </ligand>
</feature>
<feature type="binding site" evidence="1">
    <location>
        <position position="43"/>
    </location>
    <ligand>
        <name>isopentenyl diphosphate</name>
        <dbReference type="ChEBI" id="CHEBI:128769"/>
    </ligand>
</feature>
<feature type="binding site" evidence="1">
    <location>
        <position position="81"/>
    </location>
    <ligand>
        <name>(2E)-4-hydroxy-3-methylbut-2-enyl diphosphate</name>
        <dbReference type="ChEBI" id="CHEBI:128753"/>
    </ligand>
</feature>
<feature type="binding site" evidence="1">
    <location>
        <position position="81"/>
    </location>
    <ligand>
        <name>dimethylallyl diphosphate</name>
        <dbReference type="ChEBI" id="CHEBI:57623"/>
    </ligand>
</feature>
<feature type="binding site" evidence="1">
    <location>
        <position position="81"/>
    </location>
    <ligand>
        <name>isopentenyl diphosphate</name>
        <dbReference type="ChEBI" id="CHEBI:128769"/>
    </ligand>
</feature>
<feature type="binding site" evidence="1">
    <location>
        <position position="103"/>
    </location>
    <ligand>
        <name>[4Fe-4S] cluster</name>
        <dbReference type="ChEBI" id="CHEBI:49883"/>
    </ligand>
</feature>
<feature type="binding site" evidence="1">
    <location>
        <position position="131"/>
    </location>
    <ligand>
        <name>(2E)-4-hydroxy-3-methylbut-2-enyl diphosphate</name>
        <dbReference type="ChEBI" id="CHEBI:128753"/>
    </ligand>
</feature>
<feature type="binding site" evidence="1">
    <location>
        <position position="131"/>
    </location>
    <ligand>
        <name>dimethylallyl diphosphate</name>
        <dbReference type="ChEBI" id="CHEBI:57623"/>
    </ligand>
</feature>
<feature type="binding site" evidence="1">
    <location>
        <position position="131"/>
    </location>
    <ligand>
        <name>isopentenyl diphosphate</name>
        <dbReference type="ChEBI" id="CHEBI:128769"/>
    </ligand>
</feature>
<feature type="binding site" evidence="1">
    <location>
        <position position="170"/>
    </location>
    <ligand>
        <name>(2E)-4-hydroxy-3-methylbut-2-enyl diphosphate</name>
        <dbReference type="ChEBI" id="CHEBI:128753"/>
    </ligand>
</feature>
<feature type="binding site" evidence="1">
    <location>
        <position position="198"/>
    </location>
    <ligand>
        <name>[4Fe-4S] cluster</name>
        <dbReference type="ChEBI" id="CHEBI:49883"/>
    </ligand>
</feature>
<feature type="binding site" evidence="1">
    <location>
        <position position="226"/>
    </location>
    <ligand>
        <name>(2E)-4-hydroxy-3-methylbut-2-enyl diphosphate</name>
        <dbReference type="ChEBI" id="CHEBI:128753"/>
    </ligand>
</feature>
<feature type="binding site" evidence="1">
    <location>
        <position position="226"/>
    </location>
    <ligand>
        <name>dimethylallyl diphosphate</name>
        <dbReference type="ChEBI" id="CHEBI:57623"/>
    </ligand>
</feature>
<feature type="binding site" evidence="1">
    <location>
        <position position="226"/>
    </location>
    <ligand>
        <name>isopentenyl diphosphate</name>
        <dbReference type="ChEBI" id="CHEBI:128769"/>
    </ligand>
</feature>
<feature type="binding site" evidence="1">
    <location>
        <position position="228"/>
    </location>
    <ligand>
        <name>(2E)-4-hydroxy-3-methylbut-2-enyl diphosphate</name>
        <dbReference type="ChEBI" id="CHEBI:128753"/>
    </ligand>
</feature>
<feature type="binding site" evidence="1">
    <location>
        <position position="228"/>
    </location>
    <ligand>
        <name>dimethylallyl diphosphate</name>
        <dbReference type="ChEBI" id="CHEBI:57623"/>
    </ligand>
</feature>
<feature type="binding site" evidence="1">
    <location>
        <position position="228"/>
    </location>
    <ligand>
        <name>isopentenyl diphosphate</name>
        <dbReference type="ChEBI" id="CHEBI:128769"/>
    </ligand>
</feature>
<feature type="binding site" evidence="1">
    <location>
        <position position="271"/>
    </location>
    <ligand>
        <name>(2E)-4-hydroxy-3-methylbut-2-enyl diphosphate</name>
        <dbReference type="ChEBI" id="CHEBI:128753"/>
    </ligand>
</feature>
<feature type="binding site" evidence="1">
    <location>
        <position position="271"/>
    </location>
    <ligand>
        <name>dimethylallyl diphosphate</name>
        <dbReference type="ChEBI" id="CHEBI:57623"/>
    </ligand>
</feature>
<feature type="binding site" evidence="1">
    <location>
        <position position="271"/>
    </location>
    <ligand>
        <name>isopentenyl diphosphate</name>
        <dbReference type="ChEBI" id="CHEBI:128769"/>
    </ligand>
</feature>